<protein>
    <recommendedName>
        <fullName evidence="1">Cysteine--tRNA ligase</fullName>
        <ecNumber evidence="1">6.1.1.16</ecNumber>
    </recommendedName>
    <alternativeName>
        <fullName evidence="1">Cysteinyl-tRNA synthetase</fullName>
        <shortName evidence="1">CysRS</shortName>
    </alternativeName>
</protein>
<sequence>MLKIHNSQSKQLEDFTPLTPGQVKMYVCGPTVYNFLHVGNFRGPVVFNMVRNWLEHLGYKVTYALNFTDVDDKIINRANELGMSPTELSEKYIAEYKKDFASLGLRPHDMNPKVTEHMDDIRSMVESLVSQKKAYEAQGDVLYSIESFKDYGKLSGRNTDDLLAGARVEVDEKKRNPMDFALWKAAKPGEVSWPSPWGPGRPGWHIECSAMIKNLFGDQIDIHGGGMDLIFPHHENEIAQSEGCTGKAFVKYWMHNNMLNFGGQKMSKSLGNIVTMREFLEMYNAEIYKWMILSAHYRTLSDFGDEAVERAVGGLSRVYSALSMAESYLTPEVTQEDAAFAKITQDAWKKVEEAMNHDFGTPDAFAAMFEVVRQFNAQVRRGMKANPAIQGKALAFHNFVRKMGSMMSLFQEPAHAFLIKLDDMLLKKMNLERSAVDALVAERGEARAAKDFAKSDELRAKITALGISVSDTPEGSFWEVTK</sequence>
<evidence type="ECO:0000255" key="1">
    <source>
        <dbReference type="HAMAP-Rule" id="MF_00041"/>
    </source>
</evidence>
<proteinExistence type="inferred from homology"/>
<name>SYC_BDEBA</name>
<dbReference type="EC" id="6.1.1.16" evidence="1"/>
<dbReference type="EMBL" id="BX842652">
    <property type="protein sequence ID" value="CAE80140.1"/>
    <property type="molecule type" value="Genomic_DNA"/>
</dbReference>
<dbReference type="RefSeq" id="WP_011164742.1">
    <property type="nucleotide sequence ID" value="NC_005363.1"/>
</dbReference>
<dbReference type="SMR" id="Q6MKR7"/>
<dbReference type="STRING" id="264462.Bd2317"/>
<dbReference type="GeneID" id="93013244"/>
<dbReference type="KEGG" id="bba:Bd2317"/>
<dbReference type="eggNOG" id="COG0215">
    <property type="taxonomic scope" value="Bacteria"/>
</dbReference>
<dbReference type="HOGENOM" id="CLU_013528_0_1_7"/>
<dbReference type="Proteomes" id="UP000008080">
    <property type="component" value="Chromosome"/>
</dbReference>
<dbReference type="GO" id="GO:0005829">
    <property type="term" value="C:cytosol"/>
    <property type="evidence" value="ECO:0007669"/>
    <property type="project" value="TreeGrafter"/>
</dbReference>
<dbReference type="GO" id="GO:0005524">
    <property type="term" value="F:ATP binding"/>
    <property type="evidence" value="ECO:0007669"/>
    <property type="project" value="UniProtKB-UniRule"/>
</dbReference>
<dbReference type="GO" id="GO:0004817">
    <property type="term" value="F:cysteine-tRNA ligase activity"/>
    <property type="evidence" value="ECO:0007669"/>
    <property type="project" value="UniProtKB-UniRule"/>
</dbReference>
<dbReference type="GO" id="GO:0008270">
    <property type="term" value="F:zinc ion binding"/>
    <property type="evidence" value="ECO:0007669"/>
    <property type="project" value="UniProtKB-UniRule"/>
</dbReference>
<dbReference type="GO" id="GO:0006423">
    <property type="term" value="P:cysteinyl-tRNA aminoacylation"/>
    <property type="evidence" value="ECO:0007669"/>
    <property type="project" value="UniProtKB-UniRule"/>
</dbReference>
<dbReference type="CDD" id="cd00672">
    <property type="entry name" value="CysRS_core"/>
    <property type="match status" value="1"/>
</dbReference>
<dbReference type="FunFam" id="3.40.50.620:FF:000009">
    <property type="entry name" value="Cysteine--tRNA ligase"/>
    <property type="match status" value="1"/>
</dbReference>
<dbReference type="Gene3D" id="1.20.120.1910">
    <property type="entry name" value="Cysteine-tRNA ligase, C-terminal anti-codon recognition domain"/>
    <property type="match status" value="1"/>
</dbReference>
<dbReference type="Gene3D" id="3.40.50.620">
    <property type="entry name" value="HUPs"/>
    <property type="match status" value="1"/>
</dbReference>
<dbReference type="HAMAP" id="MF_00041">
    <property type="entry name" value="Cys_tRNA_synth"/>
    <property type="match status" value="1"/>
</dbReference>
<dbReference type="InterPro" id="IPR015803">
    <property type="entry name" value="Cys-tRNA-ligase"/>
</dbReference>
<dbReference type="InterPro" id="IPR015273">
    <property type="entry name" value="Cys-tRNA-synt_Ia_DALR"/>
</dbReference>
<dbReference type="InterPro" id="IPR024909">
    <property type="entry name" value="Cys-tRNA/MSH_ligase"/>
</dbReference>
<dbReference type="InterPro" id="IPR056411">
    <property type="entry name" value="CysS_C"/>
</dbReference>
<dbReference type="InterPro" id="IPR014729">
    <property type="entry name" value="Rossmann-like_a/b/a_fold"/>
</dbReference>
<dbReference type="InterPro" id="IPR032678">
    <property type="entry name" value="tRNA-synt_1_cat_dom"/>
</dbReference>
<dbReference type="InterPro" id="IPR009080">
    <property type="entry name" value="tRNAsynth_Ia_anticodon-bd"/>
</dbReference>
<dbReference type="NCBIfam" id="TIGR00435">
    <property type="entry name" value="cysS"/>
    <property type="match status" value="1"/>
</dbReference>
<dbReference type="PANTHER" id="PTHR10890:SF3">
    <property type="entry name" value="CYSTEINE--TRNA LIGASE, CYTOPLASMIC"/>
    <property type="match status" value="1"/>
</dbReference>
<dbReference type="PANTHER" id="PTHR10890">
    <property type="entry name" value="CYSTEINYL-TRNA SYNTHETASE"/>
    <property type="match status" value="1"/>
</dbReference>
<dbReference type="Pfam" id="PF23493">
    <property type="entry name" value="CysS_C"/>
    <property type="match status" value="1"/>
</dbReference>
<dbReference type="Pfam" id="PF09190">
    <property type="entry name" value="DALR_2"/>
    <property type="match status" value="1"/>
</dbReference>
<dbReference type="Pfam" id="PF01406">
    <property type="entry name" value="tRNA-synt_1e"/>
    <property type="match status" value="1"/>
</dbReference>
<dbReference type="PRINTS" id="PR00983">
    <property type="entry name" value="TRNASYNTHCYS"/>
</dbReference>
<dbReference type="SMART" id="SM00840">
    <property type="entry name" value="DALR_2"/>
    <property type="match status" value="1"/>
</dbReference>
<dbReference type="SUPFAM" id="SSF47323">
    <property type="entry name" value="Anticodon-binding domain of a subclass of class I aminoacyl-tRNA synthetases"/>
    <property type="match status" value="1"/>
</dbReference>
<dbReference type="SUPFAM" id="SSF52374">
    <property type="entry name" value="Nucleotidylyl transferase"/>
    <property type="match status" value="1"/>
</dbReference>
<reference key="1">
    <citation type="journal article" date="2004" name="Science">
        <title>A predator unmasked: life cycle of Bdellovibrio bacteriovorus from a genomic perspective.</title>
        <authorList>
            <person name="Rendulic S."/>
            <person name="Jagtap P."/>
            <person name="Rosinus A."/>
            <person name="Eppinger M."/>
            <person name="Baar C."/>
            <person name="Lanz C."/>
            <person name="Keller H."/>
            <person name="Lambert C."/>
            <person name="Evans K.J."/>
            <person name="Goesmann A."/>
            <person name="Meyer F."/>
            <person name="Sockett R.E."/>
            <person name="Schuster S.C."/>
        </authorList>
    </citation>
    <scope>NUCLEOTIDE SEQUENCE [LARGE SCALE GENOMIC DNA]</scope>
    <source>
        <strain>ATCC 15356 / DSM 50701 / NCIMB 9529 / HD100</strain>
    </source>
</reference>
<gene>
    <name evidence="1" type="primary">cysS</name>
    <name type="ordered locus">Bd2317</name>
</gene>
<keyword id="KW-0030">Aminoacyl-tRNA synthetase</keyword>
<keyword id="KW-0067">ATP-binding</keyword>
<keyword id="KW-0963">Cytoplasm</keyword>
<keyword id="KW-0436">Ligase</keyword>
<keyword id="KW-0479">Metal-binding</keyword>
<keyword id="KW-0547">Nucleotide-binding</keyword>
<keyword id="KW-0648">Protein biosynthesis</keyword>
<keyword id="KW-1185">Reference proteome</keyword>
<keyword id="KW-0862">Zinc</keyword>
<organism>
    <name type="scientific">Bdellovibrio bacteriovorus (strain ATCC 15356 / DSM 50701 / NCIMB 9529 / HD100)</name>
    <dbReference type="NCBI Taxonomy" id="264462"/>
    <lineage>
        <taxon>Bacteria</taxon>
        <taxon>Pseudomonadati</taxon>
        <taxon>Bdellovibrionota</taxon>
        <taxon>Bdellovibrionia</taxon>
        <taxon>Bdellovibrionales</taxon>
        <taxon>Pseudobdellovibrionaceae</taxon>
        <taxon>Bdellovibrio</taxon>
    </lineage>
</organism>
<feature type="chain" id="PRO_0000159356" description="Cysteine--tRNA ligase">
    <location>
        <begin position="1"/>
        <end position="482"/>
    </location>
</feature>
<feature type="short sequence motif" description="'HIGH' region">
    <location>
        <begin position="30"/>
        <end position="40"/>
    </location>
</feature>
<feature type="short sequence motif" description="'KMSKS' region">
    <location>
        <begin position="265"/>
        <end position="269"/>
    </location>
</feature>
<feature type="binding site" evidence="1">
    <location>
        <position position="28"/>
    </location>
    <ligand>
        <name>Zn(2+)</name>
        <dbReference type="ChEBI" id="CHEBI:29105"/>
    </ligand>
</feature>
<feature type="binding site" evidence="1">
    <location>
        <position position="208"/>
    </location>
    <ligand>
        <name>Zn(2+)</name>
        <dbReference type="ChEBI" id="CHEBI:29105"/>
    </ligand>
</feature>
<feature type="binding site" evidence="1">
    <location>
        <position position="233"/>
    </location>
    <ligand>
        <name>Zn(2+)</name>
        <dbReference type="ChEBI" id="CHEBI:29105"/>
    </ligand>
</feature>
<feature type="binding site" evidence="1">
    <location>
        <position position="237"/>
    </location>
    <ligand>
        <name>Zn(2+)</name>
        <dbReference type="ChEBI" id="CHEBI:29105"/>
    </ligand>
</feature>
<feature type="binding site" evidence="1">
    <location>
        <position position="268"/>
    </location>
    <ligand>
        <name>ATP</name>
        <dbReference type="ChEBI" id="CHEBI:30616"/>
    </ligand>
</feature>
<accession>Q6MKR7</accession>
<comment type="catalytic activity">
    <reaction evidence="1">
        <text>tRNA(Cys) + L-cysteine + ATP = L-cysteinyl-tRNA(Cys) + AMP + diphosphate</text>
        <dbReference type="Rhea" id="RHEA:17773"/>
        <dbReference type="Rhea" id="RHEA-COMP:9661"/>
        <dbReference type="Rhea" id="RHEA-COMP:9679"/>
        <dbReference type="ChEBI" id="CHEBI:30616"/>
        <dbReference type="ChEBI" id="CHEBI:33019"/>
        <dbReference type="ChEBI" id="CHEBI:35235"/>
        <dbReference type="ChEBI" id="CHEBI:78442"/>
        <dbReference type="ChEBI" id="CHEBI:78517"/>
        <dbReference type="ChEBI" id="CHEBI:456215"/>
        <dbReference type="EC" id="6.1.1.16"/>
    </reaction>
</comment>
<comment type="cofactor">
    <cofactor evidence="1">
        <name>Zn(2+)</name>
        <dbReference type="ChEBI" id="CHEBI:29105"/>
    </cofactor>
    <text evidence="1">Binds 1 zinc ion per subunit.</text>
</comment>
<comment type="subunit">
    <text evidence="1">Monomer.</text>
</comment>
<comment type="subcellular location">
    <subcellularLocation>
        <location evidence="1">Cytoplasm</location>
    </subcellularLocation>
</comment>
<comment type="similarity">
    <text evidence="1">Belongs to the class-I aminoacyl-tRNA synthetase family.</text>
</comment>